<sequence length="305" mass="34441">MANGEIISGFIAPHPPHLVYGENPPQNEPKSTGGWEQLRWAYERARASIEELKPDVLLVHSPHWITSVGHHFIGVDHLQGRSVDPIFPNLFRFDYSINFDVELSEACCEEGRKAGLVTKMMRNPRFRPDYGTITTLHMIRPQWDIPVVSISANNTPYYLSMEEGLGEMDVLGKATREAILKSGKRAVLLASNTLSHWHFHEEPVPPEDMSKEHPQTKIGYEWDMRMIELMRQGRMEEVFQLLPQFIEEAFAEVKSGAFTWMHAAMQYPNLPAELHGYGTVIGTGNAVVEWNLVKAGLARVAGKAA</sequence>
<gene>
    <name type="primary">amnB</name>
</gene>
<dbReference type="EC" id="1.13.11.74"/>
<dbReference type="EMBL" id="AB020521">
    <property type="protein sequence ID" value="BAB03531.1"/>
    <property type="molecule type" value="Genomic_DNA"/>
</dbReference>
<dbReference type="PDB" id="8IHG">
    <property type="method" value="X-ray"/>
    <property type="resolution" value="2.86 A"/>
    <property type="chains" value="A/C=1-305"/>
</dbReference>
<dbReference type="PDBsum" id="8IHG"/>
<dbReference type="SMR" id="O33477"/>
<dbReference type="KEGG" id="ag:BAB03531"/>
<dbReference type="BioCyc" id="MetaCyc:MONOMER-14740"/>
<dbReference type="SABIO-RK" id="O33477"/>
<dbReference type="GO" id="GO:0008198">
    <property type="term" value="F:ferrous iron binding"/>
    <property type="evidence" value="ECO:0007669"/>
    <property type="project" value="InterPro"/>
</dbReference>
<dbReference type="GO" id="GO:0016702">
    <property type="term" value="F:oxidoreductase activity, acting on single donors with incorporation of molecular oxygen, incorporation of two atoms of oxygen"/>
    <property type="evidence" value="ECO:0007669"/>
    <property type="project" value="UniProtKB-ARBA"/>
</dbReference>
<dbReference type="GO" id="GO:0009056">
    <property type="term" value="P:catabolic process"/>
    <property type="evidence" value="ECO:0007669"/>
    <property type="project" value="UniProtKB-KW"/>
</dbReference>
<dbReference type="CDD" id="cd07372">
    <property type="entry name" value="2A5CPDO_B"/>
    <property type="match status" value="1"/>
</dbReference>
<dbReference type="Gene3D" id="3.40.830.10">
    <property type="entry name" value="LigB-like"/>
    <property type="match status" value="1"/>
</dbReference>
<dbReference type="InterPro" id="IPR034943">
    <property type="entry name" value="2A5CPDO_B"/>
</dbReference>
<dbReference type="InterPro" id="IPR004183">
    <property type="entry name" value="Xdiol_dOase_suB"/>
</dbReference>
<dbReference type="Pfam" id="PF02900">
    <property type="entry name" value="LigB"/>
    <property type="match status" value="1"/>
</dbReference>
<dbReference type="SUPFAM" id="SSF53213">
    <property type="entry name" value="LigB-like"/>
    <property type="match status" value="1"/>
</dbReference>
<accession>O33477</accession>
<organism>
    <name type="scientific">Pseudomonas sp</name>
    <dbReference type="NCBI Taxonomy" id="306"/>
    <lineage>
        <taxon>Bacteria</taxon>
        <taxon>Pseudomonadati</taxon>
        <taxon>Pseudomonadota</taxon>
        <taxon>Gammaproteobacteria</taxon>
        <taxon>Pseudomonadales</taxon>
        <taxon>Pseudomonadaceae</taxon>
        <taxon>Pseudomonas</taxon>
    </lineage>
</organism>
<reference key="1">
    <citation type="journal article" date="1997" name="J. Biol. Chem.">
        <title>Novel genes encoding 2-aminophenol 1,6-dioxygenase from Pseudomonas species AP-3 growing on 2-aminophenol and catalytic properties of the purified enzyme.</title>
        <authorList>
            <person name="Takenaka S."/>
            <person name="Murakami S."/>
            <person name="Shinke R."/>
            <person name="Hatakeyama K."/>
            <person name="Yukawa H."/>
            <person name="Aoki K."/>
        </authorList>
    </citation>
    <scope>NUCLEOTIDE SEQUENCE [GENOMIC DNA]</scope>
    <scope>PROTEIN SEQUENCE OF 2-21</scope>
    <scope>FUNCTION</scope>
    <scope>CATALYTIC ACTIVITY</scope>
    <scope>COFACTOR</scope>
    <scope>BIOPHYSICOCHEMICAL PROPERTIES</scope>
    <scope>SUBUNIT</scope>
    <scope>SUBSTRATE SPECIFICITY</scope>
    <scope>ACTIVITY REGULATION</scope>
    <source>
        <strain>AP-3</strain>
    </source>
</reference>
<reference key="2">
    <citation type="journal article" date="2000" name="Arch. Microbiol.">
        <title>Complete nucleotide sequence and functional analysis of the genes for 2-aminophenol metabolism from Pseudomonas sp. AP-3.</title>
        <authorList>
            <person name="Takenaka S."/>
            <person name="Murakami S."/>
            <person name="Kim Y.J."/>
            <person name="Aoki K."/>
        </authorList>
    </citation>
    <scope>NUCLEOTIDE SEQUENCE [GENOMIC DNA]</scope>
    <source>
        <strain>AP-3</strain>
    </source>
</reference>
<comment type="function">
    <text evidence="2">Component of the 2-aminophenol 1,6-dioxygenase complex that catalyzes the ring fission of 2-aminophenol to produce 2-aminomuconic 6-semialdehyde. AmnB seems to be the catalytic subunit of the complex. The enzyme is also active toward 2-amino-p-cresol, 6-amino-m-cresol, 2-amino-m-cresol, 2-amino-4,5-dimethylphenol, 2-amino-4-chlorophenol, and catechol.</text>
</comment>
<comment type="catalytic activity">
    <reaction evidence="2">
        <text>2-aminophenol + O2 = 2-aminomuconate 6-semialdehyde</text>
        <dbReference type="Rhea" id="RHEA:26305"/>
        <dbReference type="ChEBI" id="CHEBI:15379"/>
        <dbReference type="ChEBI" id="CHEBI:18112"/>
        <dbReference type="ChEBI" id="CHEBI:77634"/>
        <dbReference type="EC" id="1.13.11.74"/>
    </reaction>
</comment>
<comment type="cofactor">
    <cofactor evidence="2">
        <name>Fe(2+)</name>
        <dbReference type="ChEBI" id="CHEBI:29033"/>
    </cofactor>
    <text evidence="2">Binds 1 Fe(2+) ion per subunit.</text>
</comment>
<comment type="activity regulation">
    <text evidence="2">Strongly inhibited by CuSO(4), FeCl(3), K(3)[Fe(CN)(6)], AgNO3, HgCl(2) and MnCl(2).</text>
</comment>
<comment type="biophysicochemical properties">
    <kinetics>
        <KM evidence="2">46.7 uM for 2-aminophenol</KM>
        <Vmax evidence="2">0.1 umol/sec/mg enzyme</Vmax>
    </kinetics>
</comment>
<comment type="subunit">
    <text evidence="2">Heterotetramer of 2 alpha and 2 beta subunits.</text>
</comment>
<comment type="similarity">
    <text evidence="3">Belongs to the LigB/MhpB extradiol dioxygenase family.</text>
</comment>
<name>AMNB_PSESP</name>
<protein>
    <recommendedName>
        <fullName>2-aminophenol 1,6-dioxygenase beta subunit</fullName>
        <ecNumber>1.13.11.74</ecNumber>
    </recommendedName>
</protein>
<proteinExistence type="evidence at protein level"/>
<feature type="initiator methionine" description="Removed" evidence="2">
    <location>
        <position position="1"/>
    </location>
</feature>
<feature type="chain" id="PRO_0000383022" description="2-aminophenol 1,6-dioxygenase beta subunit">
    <location>
        <begin position="2"/>
        <end position="305"/>
    </location>
</feature>
<feature type="binding site" evidence="1">
    <location>
        <position position="14"/>
    </location>
    <ligand>
        <name>Fe cation</name>
        <dbReference type="ChEBI" id="CHEBI:24875"/>
    </ligand>
</feature>
<feature type="binding site" evidence="1">
    <location>
        <position position="63"/>
    </location>
    <ligand>
        <name>Fe cation</name>
        <dbReference type="ChEBI" id="CHEBI:24875"/>
    </ligand>
</feature>
<feature type="binding site" evidence="1">
    <location>
        <position position="196"/>
    </location>
    <ligand>
        <name>Fe cation</name>
        <dbReference type="ChEBI" id="CHEBI:24875"/>
    </ligand>
</feature>
<evidence type="ECO:0000250" key="1"/>
<evidence type="ECO:0000269" key="2">
    <source>
    </source>
</evidence>
<evidence type="ECO:0000305" key="3"/>
<keyword id="KW-0002">3D-structure</keyword>
<keyword id="KW-0058">Aromatic hydrocarbons catabolism</keyword>
<keyword id="KW-0223">Dioxygenase</keyword>
<keyword id="KW-0903">Direct protein sequencing</keyword>
<keyword id="KW-0408">Iron</keyword>
<keyword id="KW-0479">Metal-binding</keyword>
<keyword id="KW-0560">Oxidoreductase</keyword>